<reference key="1">
    <citation type="journal article" date="2000" name="Yeast">
        <title>A fission yeast kinesin affects Golgi membrane recycling.</title>
        <authorList>
            <person name="Brazer S.-C.W."/>
            <person name="Williams H.P."/>
            <person name="Chappell T.G."/>
            <person name="Cande W.Z."/>
        </authorList>
    </citation>
    <scope>NUCLEOTIDE SEQUENCE [MRNA]</scope>
    <scope>FUNCTION</scope>
    <scope>SUBCELLULAR LOCATION</scope>
    <source>
        <strain>972 / ATCC 24843</strain>
    </source>
</reference>
<reference key="2">
    <citation type="journal article" date="2002" name="Mol. Cells">
        <title>Cloning and characterization of the kinesin-related protein, Krp1p, in Schizosaccharomyces pombe.</title>
        <authorList>
            <person name="Jeong J.W."/>
            <person name="Rhee D.K."/>
            <person name="Cho S.Y."/>
            <person name="Hae K.L."/>
            <person name="Kim D.U."/>
            <person name="Won M."/>
            <person name="Kim H.B."/>
        </authorList>
    </citation>
    <scope>NUCLEOTIDE SEQUENCE [MRNA]</scope>
    <source>
        <strain>972 / ATCC 24843</strain>
    </source>
</reference>
<reference key="3">
    <citation type="journal article" date="2002" name="Nature">
        <title>The genome sequence of Schizosaccharomyces pombe.</title>
        <authorList>
            <person name="Wood V."/>
            <person name="Gwilliam R."/>
            <person name="Rajandream M.A."/>
            <person name="Lyne M.H."/>
            <person name="Lyne R."/>
            <person name="Stewart A."/>
            <person name="Sgouros J.G."/>
            <person name="Peat N."/>
            <person name="Hayles J."/>
            <person name="Baker S.G."/>
            <person name="Basham D."/>
            <person name="Bowman S."/>
            <person name="Brooks K."/>
            <person name="Brown D."/>
            <person name="Brown S."/>
            <person name="Chillingworth T."/>
            <person name="Churcher C.M."/>
            <person name="Collins M."/>
            <person name="Connor R."/>
            <person name="Cronin A."/>
            <person name="Davis P."/>
            <person name="Feltwell T."/>
            <person name="Fraser A."/>
            <person name="Gentles S."/>
            <person name="Goble A."/>
            <person name="Hamlin N."/>
            <person name="Harris D.E."/>
            <person name="Hidalgo J."/>
            <person name="Hodgson G."/>
            <person name="Holroyd S."/>
            <person name="Hornsby T."/>
            <person name="Howarth S."/>
            <person name="Huckle E.J."/>
            <person name="Hunt S."/>
            <person name="Jagels K."/>
            <person name="James K.D."/>
            <person name="Jones L."/>
            <person name="Jones M."/>
            <person name="Leather S."/>
            <person name="McDonald S."/>
            <person name="McLean J."/>
            <person name="Mooney P."/>
            <person name="Moule S."/>
            <person name="Mungall K.L."/>
            <person name="Murphy L.D."/>
            <person name="Niblett D."/>
            <person name="Odell C."/>
            <person name="Oliver K."/>
            <person name="O'Neil S."/>
            <person name="Pearson D."/>
            <person name="Quail M.A."/>
            <person name="Rabbinowitsch E."/>
            <person name="Rutherford K.M."/>
            <person name="Rutter S."/>
            <person name="Saunders D."/>
            <person name="Seeger K."/>
            <person name="Sharp S."/>
            <person name="Skelton J."/>
            <person name="Simmonds M.N."/>
            <person name="Squares R."/>
            <person name="Squares S."/>
            <person name="Stevens K."/>
            <person name="Taylor K."/>
            <person name="Taylor R.G."/>
            <person name="Tivey A."/>
            <person name="Walsh S.V."/>
            <person name="Warren T."/>
            <person name="Whitehead S."/>
            <person name="Woodward J.R."/>
            <person name="Volckaert G."/>
            <person name="Aert R."/>
            <person name="Robben J."/>
            <person name="Grymonprez B."/>
            <person name="Weltjens I."/>
            <person name="Vanstreels E."/>
            <person name="Rieger M."/>
            <person name="Schaefer M."/>
            <person name="Mueller-Auer S."/>
            <person name="Gabel C."/>
            <person name="Fuchs M."/>
            <person name="Duesterhoeft A."/>
            <person name="Fritzc C."/>
            <person name="Holzer E."/>
            <person name="Moestl D."/>
            <person name="Hilbert H."/>
            <person name="Borzym K."/>
            <person name="Langer I."/>
            <person name="Beck A."/>
            <person name="Lehrach H."/>
            <person name="Reinhardt R."/>
            <person name="Pohl T.M."/>
            <person name="Eger P."/>
            <person name="Zimmermann W."/>
            <person name="Wedler H."/>
            <person name="Wambutt R."/>
            <person name="Purnelle B."/>
            <person name="Goffeau A."/>
            <person name="Cadieu E."/>
            <person name="Dreano S."/>
            <person name="Gloux S."/>
            <person name="Lelaure V."/>
            <person name="Mottier S."/>
            <person name="Galibert F."/>
            <person name="Aves S.J."/>
            <person name="Xiang Z."/>
            <person name="Hunt C."/>
            <person name="Moore K."/>
            <person name="Hurst S.M."/>
            <person name="Lucas M."/>
            <person name="Rochet M."/>
            <person name="Gaillardin C."/>
            <person name="Tallada V.A."/>
            <person name="Garzon A."/>
            <person name="Thode G."/>
            <person name="Daga R.R."/>
            <person name="Cruzado L."/>
            <person name="Jimenez J."/>
            <person name="Sanchez M."/>
            <person name="del Rey F."/>
            <person name="Benito J."/>
            <person name="Dominguez A."/>
            <person name="Revuelta J.L."/>
            <person name="Moreno S."/>
            <person name="Armstrong J."/>
            <person name="Forsburg S.L."/>
            <person name="Cerutti L."/>
            <person name="Lowe T."/>
            <person name="McCombie W.R."/>
            <person name="Paulsen I."/>
            <person name="Potashkin J."/>
            <person name="Shpakovski G.V."/>
            <person name="Ussery D."/>
            <person name="Barrell B.G."/>
            <person name="Nurse P."/>
        </authorList>
    </citation>
    <scope>NUCLEOTIDE SEQUENCE [LARGE SCALE GENOMIC DNA]</scope>
    <source>
        <strain>972 / ATCC 24843</strain>
    </source>
</reference>
<feature type="chain" id="PRO_0000125387" description="Kinesin-like protein 3">
    <location>
        <begin position="1"/>
        <end position="554"/>
    </location>
</feature>
<feature type="domain" description="Kinesin motor" evidence="2">
    <location>
        <begin position="3"/>
        <end position="325"/>
    </location>
</feature>
<feature type="coiled-coil region" evidence="1">
    <location>
        <begin position="446"/>
        <end position="473"/>
    </location>
</feature>
<feature type="binding site" evidence="2">
    <location>
        <begin position="84"/>
        <end position="91"/>
    </location>
    <ligand>
        <name>ATP</name>
        <dbReference type="ChEBI" id="CHEBI:30616"/>
    </ligand>
</feature>
<feature type="binding site" evidence="2">
    <location>
        <begin position="233"/>
        <end position="240"/>
    </location>
    <ligand>
        <name>ATP</name>
        <dbReference type="ChEBI" id="CHEBI:30616"/>
    </ligand>
</feature>
<feature type="sequence conflict" description="In Ref. 1; AAF14525." evidence="4" ref="1">
    <original>Q</original>
    <variation>L</variation>
    <location>
        <position position="57"/>
    </location>
</feature>
<name>KLP3_SCHPO</name>
<protein>
    <recommendedName>
        <fullName>Kinesin-like protein 3</fullName>
    </recommendedName>
    <alternativeName>
        <fullName>Kinesin-related protein 1</fullName>
    </alternativeName>
</protein>
<accession>Q9US60</accession>
<accession>Q9US61</accession>
<evidence type="ECO:0000255" key="1"/>
<evidence type="ECO:0000255" key="2">
    <source>
        <dbReference type="PROSITE-ProRule" id="PRU00283"/>
    </source>
</evidence>
<evidence type="ECO:0000269" key="3">
    <source>
    </source>
</evidence>
<evidence type="ECO:0000305" key="4"/>
<keyword id="KW-0067">ATP-binding</keyword>
<keyword id="KW-0175">Coiled coil</keyword>
<keyword id="KW-0963">Cytoplasm</keyword>
<keyword id="KW-0206">Cytoskeleton</keyword>
<keyword id="KW-0493">Microtubule</keyword>
<keyword id="KW-0505">Motor protein</keyword>
<keyword id="KW-0547">Nucleotide-binding</keyword>
<keyword id="KW-1185">Reference proteome</keyword>
<proteinExistence type="evidence at transcript level"/>
<sequence length="554" mass="61938">MTSIKVVCRIRPTNQLEQDLGGNNVIYPLNDSTVHIETSDYSGNFVFDRVFHPSSTQNDIFSYSIESTVDDLFLGYNGTVLAYGQTGSGKTYTMMGIENNFEKEGMTPRMLRRIFDKIRDSPSTTEYEVKVSYMEIYMEKIHDLLSEKNDRLTVHEDKLQGVYVQGLKTIYVSSETEALDILNKGMGSRAVASTSMNAQSSRSHSIFVLEVVQTDTESGETRRGRLFLVDLAGSESVGKSGAVGQTLEEAKKINRSLSTLGMVINSLTDSKLSHVPYRDSKLTRILKESLGGNSRTTLIINCSPDSYNATETLSTLRFGHRAKSIKNKAVVNSELSVDEMKRQLYIYKDALSRCVCGARINNNLDYNNCHSNVWSGEHSLTLSNLAEKSNLKEAEIIQGNRTIQESNNDRDESTVASIHRHNFDSDSINRLYAEAQLELKQRDGVLSSTKQQLSDLMTALGDAQERYVELVKNHRVNSNLTANNSLNDKPGFTIEQKDKNFSINNERNNFLQKLSTLDSSLAALVNVQRKLIKALISKERPQNGTVIKKIQGGT</sequence>
<dbReference type="EMBL" id="AF154055">
    <property type="protein sequence ID" value="AAF14525.1"/>
    <property type="molecule type" value="mRNA"/>
</dbReference>
<dbReference type="EMBL" id="AF156966">
    <property type="protein sequence ID" value="AAF22609.1"/>
    <property type="molecule type" value="mRNA"/>
</dbReference>
<dbReference type="EMBL" id="AF247188">
    <property type="protein sequence ID" value="AAF81205.1"/>
    <property type="molecule type" value="Genomic_DNA"/>
</dbReference>
<dbReference type="EMBL" id="CU329670">
    <property type="protein sequence ID" value="CAB75775.1"/>
    <property type="molecule type" value="Genomic_DNA"/>
</dbReference>
<dbReference type="PIR" id="T50118">
    <property type="entry name" value="T50118"/>
</dbReference>
<dbReference type="RefSeq" id="NP_594686.1">
    <property type="nucleotide sequence ID" value="NM_001020115.2"/>
</dbReference>
<dbReference type="SMR" id="Q9US60"/>
<dbReference type="BioGRID" id="278670">
    <property type="interactions" value="20"/>
</dbReference>
<dbReference type="FunCoup" id="Q9US60">
    <property type="interactions" value="271"/>
</dbReference>
<dbReference type="STRING" id="284812.Q9US60"/>
<dbReference type="iPTMnet" id="Q9US60"/>
<dbReference type="PaxDb" id="4896-SPAC1834.07.1"/>
<dbReference type="EnsemblFungi" id="SPAC1834.07.1">
    <property type="protein sequence ID" value="SPAC1834.07.1:pep"/>
    <property type="gene ID" value="SPAC1834.07"/>
</dbReference>
<dbReference type="GeneID" id="2542195"/>
<dbReference type="KEGG" id="spo:2542195"/>
<dbReference type="PomBase" id="SPAC1834.07">
    <property type="gene designation" value="klp3"/>
</dbReference>
<dbReference type="VEuPathDB" id="FungiDB:SPAC1834.07"/>
<dbReference type="eggNOG" id="KOG0240">
    <property type="taxonomic scope" value="Eukaryota"/>
</dbReference>
<dbReference type="HOGENOM" id="CLU_001485_2_1_1"/>
<dbReference type="InParanoid" id="Q9US60"/>
<dbReference type="OMA" id="TENKHGH"/>
<dbReference type="PhylomeDB" id="Q9US60"/>
<dbReference type="PRO" id="PR:Q9US60"/>
<dbReference type="Proteomes" id="UP000002485">
    <property type="component" value="Chromosome I"/>
</dbReference>
<dbReference type="GO" id="GO:0005938">
    <property type="term" value="C:cell cortex"/>
    <property type="evidence" value="ECO:0007005"/>
    <property type="project" value="PomBase"/>
</dbReference>
<dbReference type="GO" id="GO:0005737">
    <property type="term" value="C:cytoplasm"/>
    <property type="evidence" value="ECO:0000318"/>
    <property type="project" value="GO_Central"/>
</dbReference>
<dbReference type="GO" id="GO:0005881">
    <property type="term" value="C:cytoplasmic microtubule"/>
    <property type="evidence" value="ECO:0000314"/>
    <property type="project" value="CACAO"/>
</dbReference>
<dbReference type="GO" id="GO:0005871">
    <property type="term" value="C:kinesin complex"/>
    <property type="evidence" value="ECO:0000318"/>
    <property type="project" value="GO_Central"/>
</dbReference>
<dbReference type="GO" id="GO:0005874">
    <property type="term" value="C:microtubule"/>
    <property type="evidence" value="ECO:0000318"/>
    <property type="project" value="GO_Central"/>
</dbReference>
<dbReference type="GO" id="GO:0005524">
    <property type="term" value="F:ATP binding"/>
    <property type="evidence" value="ECO:0007669"/>
    <property type="project" value="UniProtKB-KW"/>
</dbReference>
<dbReference type="GO" id="GO:0016887">
    <property type="term" value="F:ATP hydrolysis activity"/>
    <property type="evidence" value="ECO:0000318"/>
    <property type="project" value="GO_Central"/>
</dbReference>
<dbReference type="GO" id="GO:0008017">
    <property type="term" value="F:microtubule binding"/>
    <property type="evidence" value="ECO:0000318"/>
    <property type="project" value="GO_Central"/>
</dbReference>
<dbReference type="GO" id="GO:0008574">
    <property type="term" value="F:plus-end-directed microtubule motor activity"/>
    <property type="evidence" value="ECO:0000318"/>
    <property type="project" value="GO_Central"/>
</dbReference>
<dbReference type="GO" id="GO:0030705">
    <property type="term" value="P:cytoskeleton-dependent intracellular transport"/>
    <property type="evidence" value="ECO:0000318"/>
    <property type="project" value="GO_Central"/>
</dbReference>
<dbReference type="GO" id="GO:0007163">
    <property type="term" value="P:establishment or maintenance of cell polarity"/>
    <property type="evidence" value="ECO:0000315"/>
    <property type="project" value="PomBase"/>
</dbReference>
<dbReference type="GO" id="GO:0006887">
    <property type="term" value="P:exocytosis"/>
    <property type="evidence" value="ECO:0000266"/>
    <property type="project" value="PomBase"/>
</dbReference>
<dbReference type="GO" id="GO:0006886">
    <property type="term" value="P:intracellular protein transport"/>
    <property type="evidence" value="ECO:0000305"/>
    <property type="project" value="PomBase"/>
</dbReference>
<dbReference type="GO" id="GO:0007018">
    <property type="term" value="P:microtubule-based movement"/>
    <property type="evidence" value="ECO:0000318"/>
    <property type="project" value="GO_Central"/>
</dbReference>
<dbReference type="GO" id="GO:0000301">
    <property type="term" value="P:retrograde transport, vesicle recycling within Golgi"/>
    <property type="evidence" value="ECO:0000315"/>
    <property type="project" value="PomBase"/>
</dbReference>
<dbReference type="GO" id="GO:0010970">
    <property type="term" value="P:transport along microtubule"/>
    <property type="evidence" value="ECO:0000255"/>
    <property type="project" value="PomBase"/>
</dbReference>
<dbReference type="CDD" id="cd01369">
    <property type="entry name" value="KISc_KHC_KIF5"/>
    <property type="match status" value="1"/>
</dbReference>
<dbReference type="FunFam" id="3.40.850.10:FF:000031">
    <property type="entry name" value="Kinesin-like protein"/>
    <property type="match status" value="1"/>
</dbReference>
<dbReference type="Gene3D" id="3.40.850.10">
    <property type="entry name" value="Kinesin motor domain"/>
    <property type="match status" value="1"/>
</dbReference>
<dbReference type="InterPro" id="IPR027640">
    <property type="entry name" value="Kinesin-like_fam"/>
</dbReference>
<dbReference type="InterPro" id="IPR019821">
    <property type="entry name" value="Kinesin_motor_CS"/>
</dbReference>
<dbReference type="InterPro" id="IPR001752">
    <property type="entry name" value="Kinesin_motor_dom"/>
</dbReference>
<dbReference type="InterPro" id="IPR036961">
    <property type="entry name" value="Kinesin_motor_dom_sf"/>
</dbReference>
<dbReference type="InterPro" id="IPR027417">
    <property type="entry name" value="P-loop_NTPase"/>
</dbReference>
<dbReference type="PANTHER" id="PTHR47969">
    <property type="entry name" value="CHROMOSOME-ASSOCIATED KINESIN KIF4A-RELATED"/>
    <property type="match status" value="1"/>
</dbReference>
<dbReference type="PANTHER" id="PTHR47969:SF15">
    <property type="entry name" value="CHROMOSOME-ASSOCIATED KINESIN KIF4A-RELATED"/>
    <property type="match status" value="1"/>
</dbReference>
<dbReference type="Pfam" id="PF00225">
    <property type="entry name" value="Kinesin"/>
    <property type="match status" value="1"/>
</dbReference>
<dbReference type="PRINTS" id="PR00380">
    <property type="entry name" value="KINESINHEAVY"/>
</dbReference>
<dbReference type="SMART" id="SM00129">
    <property type="entry name" value="KISc"/>
    <property type="match status" value="1"/>
</dbReference>
<dbReference type="SUPFAM" id="SSF52540">
    <property type="entry name" value="P-loop containing nucleoside triphosphate hydrolases"/>
    <property type="match status" value="1"/>
</dbReference>
<dbReference type="PROSITE" id="PS00411">
    <property type="entry name" value="KINESIN_MOTOR_1"/>
    <property type="match status" value="1"/>
</dbReference>
<dbReference type="PROSITE" id="PS50067">
    <property type="entry name" value="KINESIN_MOTOR_2"/>
    <property type="match status" value="1"/>
</dbReference>
<comment type="function">
    <text evidence="3">Cytoplasmic motor that could play a role in Golgi membrane recycling.</text>
</comment>
<comment type="subcellular location">
    <subcellularLocation>
        <location evidence="3">Cytoplasm</location>
        <location evidence="3">Cytoskeleton</location>
    </subcellularLocation>
</comment>
<comment type="similarity">
    <text evidence="2">Belongs to the TRAFAC class myosin-kinesin ATPase superfamily. Kinesin family.</text>
</comment>
<organism>
    <name type="scientific">Schizosaccharomyces pombe (strain 972 / ATCC 24843)</name>
    <name type="common">Fission yeast</name>
    <dbReference type="NCBI Taxonomy" id="284812"/>
    <lineage>
        <taxon>Eukaryota</taxon>
        <taxon>Fungi</taxon>
        <taxon>Dikarya</taxon>
        <taxon>Ascomycota</taxon>
        <taxon>Taphrinomycotina</taxon>
        <taxon>Schizosaccharomycetes</taxon>
        <taxon>Schizosaccharomycetales</taxon>
        <taxon>Schizosaccharomycetaceae</taxon>
        <taxon>Schizosaccharomyces</taxon>
    </lineage>
</organism>
<gene>
    <name type="primary">klp3</name>
    <name type="synonym">krp1</name>
    <name type="ORF">SPAC1834.07</name>
</gene>